<evidence type="ECO:0000250" key="1">
    <source>
        <dbReference type="UniProtKB" id="P9WGB5"/>
    </source>
</evidence>
<evidence type="ECO:0000255" key="2">
    <source>
        <dbReference type="HAMAP-Rule" id="MF_02056"/>
    </source>
</evidence>
<evidence type="ECO:0000269" key="3">
    <source>
    </source>
</evidence>
<evidence type="ECO:0000303" key="4">
    <source>
    </source>
</evidence>
<evidence type="ECO:0000305" key="5"/>
<name>METZ_PSEAE</name>
<feature type="chain" id="PRO_0000114785" description="O-succinylhomoserine sulfhydrylase">
    <location>
        <begin position="1"/>
        <end position="403"/>
    </location>
</feature>
<feature type="modified residue" description="N6-(pyridoxal phosphate)lysine" evidence="1 2">
    <location>
        <position position="219"/>
    </location>
</feature>
<accession>P55218</accession>
<protein>
    <recommendedName>
        <fullName evidence="2 4">O-succinylhomoserine sulfhydrylase</fullName>
        <shortName evidence="2 5">OSH sulfhydrylase</shortName>
        <shortName evidence="2 5">OSHS sulfhydrylase</shortName>
        <ecNumber evidence="2 3">2.5.1.-</ecNumber>
    </recommendedName>
</protein>
<reference key="1">
    <citation type="journal article" date="1995" name="Microbiology">
        <title>A direct sulfhydrylation pathway is used for methionine biosynthesis in Pseudomonas aeruginosa.</title>
        <authorList>
            <person name="Foglino M."/>
            <person name="Borne F."/>
            <person name="Bally M."/>
            <person name="Ball G."/>
            <person name="Patte J.-C."/>
        </authorList>
    </citation>
    <scope>NUCLEOTIDE SEQUENCE [GENOMIC DNA]</scope>
    <scope>FUNCTION</scope>
    <scope>CATALYTIC ACTIVITY</scope>
    <scope>GENE NAME</scope>
    <scope>PATHWAY</scope>
    <source>
        <strain>ATCC 15692 / DSM 22644 / CIP 104116 / JCM 14847 / LMG 12228 / 1C / PRS 101 / PAO1</strain>
    </source>
</reference>
<reference key="2">
    <citation type="journal article" date="2000" name="Nature">
        <title>Complete genome sequence of Pseudomonas aeruginosa PAO1, an opportunistic pathogen.</title>
        <authorList>
            <person name="Stover C.K."/>
            <person name="Pham X.-Q.T."/>
            <person name="Erwin A.L."/>
            <person name="Mizoguchi S.D."/>
            <person name="Warrener P."/>
            <person name="Hickey M.J."/>
            <person name="Brinkman F.S.L."/>
            <person name="Hufnagle W.O."/>
            <person name="Kowalik D.J."/>
            <person name="Lagrou M."/>
            <person name="Garber R.L."/>
            <person name="Goltry L."/>
            <person name="Tolentino E."/>
            <person name="Westbrock-Wadman S."/>
            <person name="Yuan Y."/>
            <person name="Brody L.L."/>
            <person name="Coulter S.N."/>
            <person name="Folger K.R."/>
            <person name="Kas A."/>
            <person name="Larbig K."/>
            <person name="Lim R.M."/>
            <person name="Smith K.A."/>
            <person name="Spencer D.H."/>
            <person name="Wong G.K.-S."/>
            <person name="Wu Z."/>
            <person name="Paulsen I.T."/>
            <person name="Reizer J."/>
            <person name="Saier M.H. Jr."/>
            <person name="Hancock R.E.W."/>
            <person name="Lory S."/>
            <person name="Olson M.V."/>
        </authorList>
    </citation>
    <scope>NUCLEOTIDE SEQUENCE [LARGE SCALE GENOMIC DNA]</scope>
    <source>
        <strain>ATCC 15692 / DSM 22644 / CIP 104116 / JCM 14847 / LMG 12228 / 1C / PRS 101 / PAO1</strain>
    </source>
</reference>
<proteinExistence type="evidence at protein level"/>
<sequence length="403" mass="43185">MTQDWDAGRLDSDLEGAAFDTLAVRAGQRRTPEGEHGEALFTTSSYVFRTAADAAARFAGEVPGNVYSRYTNPTVRTFEERIAALEGAEQAVATASGMSAILALVMSLCSSGDHVLVSRSVFGSTISLFDKYFKRFGIQVDYPPLSDLAAWEAACKPNTKLFFVESPSNPLAELVDIAALAEIAHAKGALLAVDNCFCTPALQQPLKLGADVVIHSATKYIDGQGRGMGGVVAGRGEQMKEVVGFLRTAGPTLSPFNAWLFLKGLETLRIRMQAHSASALALAEWLERQPGIERVYYAGLPSHPQHELARRQQSGFGAVVSFDVKGGRDAAWRFIDATRMVSITTNLGDTKTTIAHPATTSHGRLSPEDRARAGIGDSLIRVAVGLEDLDDLKADMARGLAAL</sequence>
<comment type="function">
    <text evidence="3">Catalyzes the formation of L-homocysteine from O-succinyl-L-homoserine (OSHS) and hydrogen sulfide. Cannot use the other activated form of L-homoserine, O-acetyl-L-homoserine, as a substrate.</text>
</comment>
<comment type="catalytic activity">
    <reaction evidence="2 3">
        <text>O-succinyl-L-homoserine + hydrogen sulfide = L-homocysteine + succinate</text>
        <dbReference type="Rhea" id="RHEA:27826"/>
        <dbReference type="ChEBI" id="CHEBI:29919"/>
        <dbReference type="ChEBI" id="CHEBI:30031"/>
        <dbReference type="ChEBI" id="CHEBI:57661"/>
        <dbReference type="ChEBI" id="CHEBI:58199"/>
    </reaction>
</comment>
<comment type="cofactor">
    <cofactor evidence="1 2">
        <name>pyridoxal 5'-phosphate</name>
        <dbReference type="ChEBI" id="CHEBI:597326"/>
    </cofactor>
</comment>
<comment type="pathway">
    <text evidence="2 3">Amino-acid biosynthesis; L-methionine biosynthesis via de novo pathway; L-homocysteine from O-succinyl-L-homoserine: step 1/1.</text>
</comment>
<comment type="subunit">
    <text evidence="1 2">Homotetramer.</text>
</comment>
<comment type="similarity">
    <text evidence="2 5">Belongs to the trans-sulfuration enzymes family. MetZ subfamily.</text>
</comment>
<gene>
    <name evidence="2 4" type="primary">metZ</name>
    <name type="ordered locus">PA3107</name>
</gene>
<keyword id="KW-0028">Amino-acid biosynthesis</keyword>
<keyword id="KW-0486">Methionine biosynthesis</keyword>
<keyword id="KW-0663">Pyridoxal phosphate</keyword>
<keyword id="KW-1185">Reference proteome</keyword>
<keyword id="KW-0808">Transferase</keyword>
<dbReference type="EC" id="2.5.1.-" evidence="2 3"/>
<dbReference type="EMBL" id="U10904">
    <property type="protein sequence ID" value="AAA83435.1"/>
    <property type="molecule type" value="Genomic_DNA"/>
</dbReference>
<dbReference type="EMBL" id="AE004091">
    <property type="protein sequence ID" value="AAG06495.1"/>
    <property type="molecule type" value="Genomic_DNA"/>
</dbReference>
<dbReference type="PIR" id="F83256">
    <property type="entry name" value="F83256"/>
</dbReference>
<dbReference type="PIR" id="S39822">
    <property type="entry name" value="S39822"/>
</dbReference>
<dbReference type="RefSeq" id="NP_251797.1">
    <property type="nucleotide sequence ID" value="NC_002516.2"/>
</dbReference>
<dbReference type="RefSeq" id="WP_003113933.1">
    <property type="nucleotide sequence ID" value="NZ_QZGE01000009.1"/>
</dbReference>
<dbReference type="SMR" id="P55218"/>
<dbReference type="STRING" id="208964.PA3107"/>
<dbReference type="PaxDb" id="208964-PA3107"/>
<dbReference type="GeneID" id="880476"/>
<dbReference type="KEGG" id="pae:PA3107"/>
<dbReference type="PATRIC" id="fig|208964.12.peg.3259"/>
<dbReference type="PseudoCAP" id="PA3107"/>
<dbReference type="HOGENOM" id="CLU_018986_2_0_6"/>
<dbReference type="InParanoid" id="P55218"/>
<dbReference type="OrthoDB" id="9805807at2"/>
<dbReference type="PhylomeDB" id="P55218"/>
<dbReference type="BioCyc" id="MetaCyc:MONOMER-13931"/>
<dbReference type="BioCyc" id="PAER208964:G1FZ6-3163-MONOMER"/>
<dbReference type="UniPathway" id="UPA00051">
    <property type="reaction ID" value="UER00449"/>
</dbReference>
<dbReference type="Proteomes" id="UP000002438">
    <property type="component" value="Chromosome"/>
</dbReference>
<dbReference type="GO" id="GO:0005737">
    <property type="term" value="C:cytoplasm"/>
    <property type="evidence" value="ECO:0000318"/>
    <property type="project" value="GO_Central"/>
</dbReference>
<dbReference type="GO" id="GO:0016846">
    <property type="term" value="F:carbon-sulfur lyase activity"/>
    <property type="evidence" value="ECO:0000318"/>
    <property type="project" value="GO_Central"/>
</dbReference>
<dbReference type="GO" id="GO:0030170">
    <property type="term" value="F:pyridoxal phosphate binding"/>
    <property type="evidence" value="ECO:0000318"/>
    <property type="project" value="GO_Central"/>
</dbReference>
<dbReference type="GO" id="GO:0016765">
    <property type="term" value="F:transferase activity, transferring alkyl or aryl (other than methyl) groups"/>
    <property type="evidence" value="ECO:0007669"/>
    <property type="project" value="UniProtKB-UniRule"/>
</dbReference>
<dbReference type="GO" id="GO:0071266">
    <property type="term" value="P:'de novo' L-methionine biosynthetic process"/>
    <property type="evidence" value="ECO:0007669"/>
    <property type="project" value="UniProtKB-UniRule"/>
</dbReference>
<dbReference type="GO" id="GO:0071268">
    <property type="term" value="P:homocysteine biosynthetic process"/>
    <property type="evidence" value="ECO:0007669"/>
    <property type="project" value="InterPro"/>
</dbReference>
<dbReference type="GO" id="GO:0009086">
    <property type="term" value="P:methionine biosynthetic process"/>
    <property type="evidence" value="ECO:0000315"/>
    <property type="project" value="PseudoCAP"/>
</dbReference>
<dbReference type="GO" id="GO:0019346">
    <property type="term" value="P:transsulfuration"/>
    <property type="evidence" value="ECO:0000318"/>
    <property type="project" value="GO_Central"/>
</dbReference>
<dbReference type="CDD" id="cd00614">
    <property type="entry name" value="CGS_like"/>
    <property type="match status" value="1"/>
</dbReference>
<dbReference type="FunFam" id="3.90.1150.10:FF:000033">
    <property type="entry name" value="Cystathionine gamma-synthase"/>
    <property type="match status" value="1"/>
</dbReference>
<dbReference type="FunFam" id="3.40.640.10:FF:000035">
    <property type="entry name" value="O-succinylhomoserine sulfhydrylase"/>
    <property type="match status" value="1"/>
</dbReference>
<dbReference type="Gene3D" id="3.90.1150.10">
    <property type="entry name" value="Aspartate Aminotransferase, domain 1"/>
    <property type="match status" value="1"/>
</dbReference>
<dbReference type="Gene3D" id="3.40.640.10">
    <property type="entry name" value="Type I PLP-dependent aspartate aminotransferase-like (Major domain)"/>
    <property type="match status" value="1"/>
</dbReference>
<dbReference type="HAMAP" id="MF_02056">
    <property type="entry name" value="MetZ"/>
    <property type="match status" value="1"/>
</dbReference>
<dbReference type="InterPro" id="IPR000277">
    <property type="entry name" value="Cys/Met-Metab_PyrdxlP-dep_enz"/>
</dbReference>
<dbReference type="InterPro" id="IPR054542">
    <property type="entry name" value="Cys_met_metab_PP"/>
</dbReference>
<dbReference type="InterPro" id="IPR006234">
    <property type="entry name" value="O-succ-hSer_sulfhydrylase"/>
</dbReference>
<dbReference type="InterPro" id="IPR015424">
    <property type="entry name" value="PyrdxlP-dep_Trfase"/>
</dbReference>
<dbReference type="InterPro" id="IPR015421">
    <property type="entry name" value="PyrdxlP-dep_Trfase_major"/>
</dbReference>
<dbReference type="InterPro" id="IPR015422">
    <property type="entry name" value="PyrdxlP-dep_Trfase_small"/>
</dbReference>
<dbReference type="NCBIfam" id="TIGR01325">
    <property type="entry name" value="O_suc_HS_sulf"/>
    <property type="match status" value="1"/>
</dbReference>
<dbReference type="NCBIfam" id="NF006003">
    <property type="entry name" value="PRK08133.1"/>
    <property type="match status" value="1"/>
</dbReference>
<dbReference type="PANTHER" id="PTHR11808:SF80">
    <property type="entry name" value="CYSTATHIONINE GAMMA-LYASE"/>
    <property type="match status" value="1"/>
</dbReference>
<dbReference type="PANTHER" id="PTHR11808">
    <property type="entry name" value="TRANS-SULFURATION ENZYME FAMILY MEMBER"/>
    <property type="match status" value="1"/>
</dbReference>
<dbReference type="Pfam" id="PF01053">
    <property type="entry name" value="Cys_Met_Meta_PP"/>
    <property type="match status" value="1"/>
</dbReference>
<dbReference type="PIRSF" id="PIRSF001434">
    <property type="entry name" value="CGS"/>
    <property type="match status" value="1"/>
</dbReference>
<dbReference type="SUPFAM" id="SSF53383">
    <property type="entry name" value="PLP-dependent transferases"/>
    <property type="match status" value="1"/>
</dbReference>
<dbReference type="PROSITE" id="PS00868">
    <property type="entry name" value="CYS_MET_METAB_PP"/>
    <property type="match status" value="1"/>
</dbReference>
<organism>
    <name type="scientific">Pseudomonas aeruginosa (strain ATCC 15692 / DSM 22644 / CIP 104116 / JCM 14847 / LMG 12228 / 1C / PRS 101 / PAO1)</name>
    <dbReference type="NCBI Taxonomy" id="208964"/>
    <lineage>
        <taxon>Bacteria</taxon>
        <taxon>Pseudomonadati</taxon>
        <taxon>Pseudomonadota</taxon>
        <taxon>Gammaproteobacteria</taxon>
        <taxon>Pseudomonadales</taxon>
        <taxon>Pseudomonadaceae</taxon>
        <taxon>Pseudomonas</taxon>
    </lineage>
</organism>